<accession>Q8G2Y6</accession>
<accession>G0KBE4</accession>
<proteinExistence type="inferred from homology"/>
<reference key="1">
    <citation type="journal article" date="2002" name="Proc. Natl. Acad. Sci. U.S.A.">
        <title>The Brucella suis genome reveals fundamental similarities between animal and plant pathogens and symbionts.</title>
        <authorList>
            <person name="Paulsen I.T."/>
            <person name="Seshadri R."/>
            <person name="Nelson K.E."/>
            <person name="Eisen J.A."/>
            <person name="Heidelberg J.F."/>
            <person name="Read T.D."/>
            <person name="Dodson R.J."/>
            <person name="Umayam L.A."/>
            <person name="Brinkac L.M."/>
            <person name="Beanan M.J."/>
            <person name="Daugherty S.C."/>
            <person name="DeBoy R.T."/>
            <person name="Durkin A.S."/>
            <person name="Kolonay J.F."/>
            <person name="Madupu R."/>
            <person name="Nelson W.C."/>
            <person name="Ayodeji B."/>
            <person name="Kraul M."/>
            <person name="Shetty J."/>
            <person name="Malek J.A."/>
            <person name="Van Aken S.E."/>
            <person name="Riedmuller S."/>
            <person name="Tettelin H."/>
            <person name="Gill S.R."/>
            <person name="White O."/>
            <person name="Salzberg S.L."/>
            <person name="Hoover D.L."/>
            <person name="Lindler L.E."/>
            <person name="Halling S.M."/>
            <person name="Boyle S.M."/>
            <person name="Fraser C.M."/>
        </authorList>
    </citation>
    <scope>NUCLEOTIDE SEQUENCE [LARGE SCALE GENOMIC DNA]</scope>
    <source>
        <strain>1330</strain>
    </source>
</reference>
<reference key="2">
    <citation type="journal article" date="2011" name="J. Bacteriol.">
        <title>Revised genome sequence of Brucella suis 1330.</title>
        <authorList>
            <person name="Tae H."/>
            <person name="Shallom S."/>
            <person name="Settlage R."/>
            <person name="Preston D."/>
            <person name="Adams L.G."/>
            <person name="Garner H.R."/>
        </authorList>
    </citation>
    <scope>NUCLEOTIDE SEQUENCE [LARGE SCALE GENOMIC DNA]</scope>
    <source>
        <strain>1330</strain>
    </source>
</reference>
<protein>
    <recommendedName>
        <fullName evidence="1">Protein GrpE</fullName>
    </recommendedName>
    <alternativeName>
        <fullName evidence="1">HSP-70 cofactor</fullName>
    </alternativeName>
</protein>
<name>GRPE_BRUSU</name>
<keyword id="KW-0143">Chaperone</keyword>
<keyword id="KW-0963">Cytoplasm</keyword>
<keyword id="KW-0346">Stress response</keyword>
<sequence length="230" mass="25310">MADEKNKPENPDLDQRDINNPRDREALKQAADDFLKARRAEARAEAAADEAEGEVDETANRIAVLEADNTELKDQMLRVAAEMENLRKRTQRDVQDARAYAITNFARDMLSVSDNLRRALDAIPADALEADSNLKSLSEGVEMTERAMLLALERHGVKKLEPEGQKFDPNFHQAMFEVPNPDLPNNTVVQVVQAGYAIGDRVLRPAMVGVSKGGPKVSAENGASTSEDNA</sequence>
<evidence type="ECO:0000255" key="1">
    <source>
        <dbReference type="HAMAP-Rule" id="MF_01151"/>
    </source>
</evidence>
<evidence type="ECO:0000256" key="2">
    <source>
        <dbReference type="SAM" id="MobiDB-lite"/>
    </source>
</evidence>
<comment type="function">
    <text evidence="1">Participates actively in the response to hyperosmotic and heat shock by preventing the aggregation of stress-denatured proteins, in association with DnaK and GrpE. It is the nucleotide exchange factor for DnaK and may function as a thermosensor. Unfolded proteins bind initially to DnaJ; upon interaction with the DnaJ-bound protein, DnaK hydrolyzes its bound ATP, resulting in the formation of a stable complex. GrpE releases ADP from DnaK; ATP binding to DnaK triggers the release of the substrate protein, thus completing the reaction cycle. Several rounds of ATP-dependent interactions between DnaJ, DnaK and GrpE are required for fully efficient folding.</text>
</comment>
<comment type="subunit">
    <text evidence="1">Homodimer.</text>
</comment>
<comment type="subcellular location">
    <subcellularLocation>
        <location evidence="1">Cytoplasm</location>
    </subcellularLocation>
</comment>
<comment type="similarity">
    <text evidence="1">Belongs to the GrpE family.</text>
</comment>
<organism>
    <name type="scientific">Brucella suis biovar 1 (strain 1330)</name>
    <dbReference type="NCBI Taxonomy" id="204722"/>
    <lineage>
        <taxon>Bacteria</taxon>
        <taxon>Pseudomonadati</taxon>
        <taxon>Pseudomonadota</taxon>
        <taxon>Alphaproteobacteria</taxon>
        <taxon>Hyphomicrobiales</taxon>
        <taxon>Brucellaceae</taxon>
        <taxon>Brucella/Ochrobactrum group</taxon>
        <taxon>Brucella</taxon>
    </lineage>
</organism>
<gene>
    <name evidence="1" type="primary">grpE</name>
    <name type="ordered locus">BR0171</name>
    <name type="ordered locus">BS1330_I0171</name>
</gene>
<feature type="chain" id="PRO_0000113756" description="Protein GrpE">
    <location>
        <begin position="1"/>
        <end position="230"/>
    </location>
</feature>
<feature type="region of interest" description="Disordered" evidence="2">
    <location>
        <begin position="1"/>
        <end position="26"/>
    </location>
</feature>
<feature type="region of interest" description="Disordered" evidence="2">
    <location>
        <begin position="209"/>
        <end position="230"/>
    </location>
</feature>
<feature type="compositionally biased region" description="Polar residues" evidence="2">
    <location>
        <begin position="221"/>
        <end position="230"/>
    </location>
</feature>
<dbReference type="EMBL" id="AE014291">
    <property type="protein sequence ID" value="AAN29124.1"/>
    <property type="molecule type" value="Genomic_DNA"/>
</dbReference>
<dbReference type="EMBL" id="CP002997">
    <property type="protein sequence ID" value="AEM17536.1"/>
    <property type="molecule type" value="Genomic_DNA"/>
</dbReference>
<dbReference type="RefSeq" id="WP_004685378.1">
    <property type="nucleotide sequence ID" value="NZ_KN046804.1"/>
</dbReference>
<dbReference type="SMR" id="Q8G2Y6"/>
<dbReference type="GeneID" id="97534420"/>
<dbReference type="KEGG" id="bms:BR0171"/>
<dbReference type="KEGG" id="bsi:BS1330_I0171"/>
<dbReference type="PATRIC" id="fig|204722.21.peg.948"/>
<dbReference type="HOGENOM" id="CLU_057217_6_2_5"/>
<dbReference type="PhylomeDB" id="Q8G2Y6"/>
<dbReference type="Proteomes" id="UP000007104">
    <property type="component" value="Chromosome I"/>
</dbReference>
<dbReference type="GO" id="GO:0005737">
    <property type="term" value="C:cytoplasm"/>
    <property type="evidence" value="ECO:0007669"/>
    <property type="project" value="UniProtKB-SubCell"/>
</dbReference>
<dbReference type="GO" id="GO:0000774">
    <property type="term" value="F:adenyl-nucleotide exchange factor activity"/>
    <property type="evidence" value="ECO:0007669"/>
    <property type="project" value="InterPro"/>
</dbReference>
<dbReference type="GO" id="GO:0042803">
    <property type="term" value="F:protein homodimerization activity"/>
    <property type="evidence" value="ECO:0007669"/>
    <property type="project" value="InterPro"/>
</dbReference>
<dbReference type="GO" id="GO:0051087">
    <property type="term" value="F:protein-folding chaperone binding"/>
    <property type="evidence" value="ECO:0007669"/>
    <property type="project" value="InterPro"/>
</dbReference>
<dbReference type="GO" id="GO:0051082">
    <property type="term" value="F:unfolded protein binding"/>
    <property type="evidence" value="ECO:0007669"/>
    <property type="project" value="TreeGrafter"/>
</dbReference>
<dbReference type="GO" id="GO:0006457">
    <property type="term" value="P:protein folding"/>
    <property type="evidence" value="ECO:0007669"/>
    <property type="project" value="InterPro"/>
</dbReference>
<dbReference type="CDD" id="cd00446">
    <property type="entry name" value="GrpE"/>
    <property type="match status" value="1"/>
</dbReference>
<dbReference type="FunFam" id="2.30.22.10:FF:000001">
    <property type="entry name" value="Protein GrpE"/>
    <property type="match status" value="1"/>
</dbReference>
<dbReference type="Gene3D" id="3.90.20.20">
    <property type="match status" value="1"/>
</dbReference>
<dbReference type="Gene3D" id="2.30.22.10">
    <property type="entry name" value="Head domain of nucleotide exchange factor GrpE"/>
    <property type="match status" value="1"/>
</dbReference>
<dbReference type="HAMAP" id="MF_01151">
    <property type="entry name" value="GrpE"/>
    <property type="match status" value="1"/>
</dbReference>
<dbReference type="InterPro" id="IPR000740">
    <property type="entry name" value="GrpE"/>
</dbReference>
<dbReference type="InterPro" id="IPR013805">
    <property type="entry name" value="GrpE_coiled_coil"/>
</dbReference>
<dbReference type="InterPro" id="IPR009012">
    <property type="entry name" value="GrpE_head"/>
</dbReference>
<dbReference type="NCBIfam" id="NF010737">
    <property type="entry name" value="PRK14139.1"/>
    <property type="match status" value="1"/>
</dbReference>
<dbReference type="NCBIfam" id="NF010738">
    <property type="entry name" value="PRK14140.1"/>
    <property type="match status" value="1"/>
</dbReference>
<dbReference type="NCBIfam" id="NF010739">
    <property type="entry name" value="PRK14141.1"/>
    <property type="match status" value="1"/>
</dbReference>
<dbReference type="NCBIfam" id="NF010748">
    <property type="entry name" value="PRK14150.1"/>
    <property type="match status" value="1"/>
</dbReference>
<dbReference type="PANTHER" id="PTHR21237">
    <property type="entry name" value="GRPE PROTEIN"/>
    <property type="match status" value="1"/>
</dbReference>
<dbReference type="PANTHER" id="PTHR21237:SF23">
    <property type="entry name" value="GRPE PROTEIN HOMOLOG, MITOCHONDRIAL"/>
    <property type="match status" value="1"/>
</dbReference>
<dbReference type="Pfam" id="PF01025">
    <property type="entry name" value="GrpE"/>
    <property type="match status" value="1"/>
</dbReference>
<dbReference type="PRINTS" id="PR00773">
    <property type="entry name" value="GRPEPROTEIN"/>
</dbReference>
<dbReference type="SUPFAM" id="SSF58014">
    <property type="entry name" value="Coiled-coil domain of nucleotide exchange factor GrpE"/>
    <property type="match status" value="1"/>
</dbReference>
<dbReference type="SUPFAM" id="SSF51064">
    <property type="entry name" value="Head domain of nucleotide exchange factor GrpE"/>
    <property type="match status" value="1"/>
</dbReference>
<dbReference type="PROSITE" id="PS01071">
    <property type="entry name" value="GRPE"/>
    <property type="match status" value="1"/>
</dbReference>